<proteinExistence type="inferred from homology"/>
<protein>
    <recommendedName>
        <fullName evidence="2">Translation initiation factor IF-2</fullName>
    </recommendedName>
</protein>
<evidence type="ECO:0000250" key="1"/>
<evidence type="ECO:0000255" key="2">
    <source>
        <dbReference type="HAMAP-Rule" id="MF_00100"/>
    </source>
</evidence>
<evidence type="ECO:0000256" key="3">
    <source>
        <dbReference type="SAM" id="MobiDB-lite"/>
    </source>
</evidence>
<dbReference type="EMBL" id="AL591688">
    <property type="protein sequence ID" value="CAC41676.1"/>
    <property type="molecule type" value="Genomic_DNA"/>
</dbReference>
<dbReference type="RefSeq" id="NP_384345.1">
    <property type="nucleotide sequence ID" value="NC_003047.1"/>
</dbReference>
<dbReference type="RefSeq" id="WP_010968445.1">
    <property type="nucleotide sequence ID" value="NC_003047.1"/>
</dbReference>
<dbReference type="SMR" id="Q92SW4"/>
<dbReference type="EnsemblBacteria" id="CAC41676">
    <property type="protein sequence ID" value="CAC41676"/>
    <property type="gene ID" value="SMc02914"/>
</dbReference>
<dbReference type="KEGG" id="sme:SMc02914"/>
<dbReference type="PATRIC" id="fig|266834.11.peg.1605"/>
<dbReference type="eggNOG" id="COG0532">
    <property type="taxonomic scope" value="Bacteria"/>
</dbReference>
<dbReference type="HOGENOM" id="CLU_006301_10_2_5"/>
<dbReference type="OrthoDB" id="9811804at2"/>
<dbReference type="Proteomes" id="UP000001976">
    <property type="component" value="Chromosome"/>
</dbReference>
<dbReference type="GO" id="GO:0005829">
    <property type="term" value="C:cytosol"/>
    <property type="evidence" value="ECO:0007669"/>
    <property type="project" value="TreeGrafter"/>
</dbReference>
<dbReference type="GO" id="GO:0005525">
    <property type="term" value="F:GTP binding"/>
    <property type="evidence" value="ECO:0007669"/>
    <property type="project" value="UniProtKB-KW"/>
</dbReference>
<dbReference type="GO" id="GO:0003924">
    <property type="term" value="F:GTPase activity"/>
    <property type="evidence" value="ECO:0007669"/>
    <property type="project" value="UniProtKB-UniRule"/>
</dbReference>
<dbReference type="GO" id="GO:0097216">
    <property type="term" value="F:guanosine tetraphosphate binding"/>
    <property type="evidence" value="ECO:0007669"/>
    <property type="project" value="UniProtKB-ARBA"/>
</dbReference>
<dbReference type="GO" id="GO:0003743">
    <property type="term" value="F:translation initiation factor activity"/>
    <property type="evidence" value="ECO:0007669"/>
    <property type="project" value="UniProtKB-UniRule"/>
</dbReference>
<dbReference type="CDD" id="cd01887">
    <property type="entry name" value="IF2_eIF5B"/>
    <property type="match status" value="1"/>
</dbReference>
<dbReference type="CDD" id="cd03702">
    <property type="entry name" value="IF2_mtIF2_II"/>
    <property type="match status" value="1"/>
</dbReference>
<dbReference type="CDD" id="cd03692">
    <property type="entry name" value="mtIF2_IVc"/>
    <property type="match status" value="1"/>
</dbReference>
<dbReference type="FunFam" id="2.40.30.10:FF:000007">
    <property type="entry name" value="Translation initiation factor IF-2"/>
    <property type="match status" value="1"/>
</dbReference>
<dbReference type="FunFam" id="2.40.30.10:FF:000008">
    <property type="entry name" value="Translation initiation factor IF-2"/>
    <property type="match status" value="1"/>
</dbReference>
<dbReference type="FunFam" id="3.40.50.10050:FF:000001">
    <property type="entry name" value="Translation initiation factor IF-2"/>
    <property type="match status" value="1"/>
</dbReference>
<dbReference type="FunFam" id="3.40.50.300:FF:000019">
    <property type="entry name" value="Translation initiation factor IF-2"/>
    <property type="match status" value="1"/>
</dbReference>
<dbReference type="Gene3D" id="3.40.50.300">
    <property type="entry name" value="P-loop containing nucleotide triphosphate hydrolases"/>
    <property type="match status" value="1"/>
</dbReference>
<dbReference type="Gene3D" id="2.40.30.10">
    <property type="entry name" value="Translation factors"/>
    <property type="match status" value="2"/>
</dbReference>
<dbReference type="Gene3D" id="3.40.50.10050">
    <property type="entry name" value="Translation initiation factor IF- 2, domain 3"/>
    <property type="match status" value="1"/>
</dbReference>
<dbReference type="HAMAP" id="MF_00100_B">
    <property type="entry name" value="IF_2_B"/>
    <property type="match status" value="1"/>
</dbReference>
<dbReference type="InterPro" id="IPR053905">
    <property type="entry name" value="EF-G-like_DII"/>
</dbReference>
<dbReference type="InterPro" id="IPR004161">
    <property type="entry name" value="EFTu-like_2"/>
</dbReference>
<dbReference type="InterPro" id="IPR013575">
    <property type="entry name" value="IF2_assoc_dom_bac"/>
</dbReference>
<dbReference type="InterPro" id="IPR044145">
    <property type="entry name" value="IF2_II"/>
</dbReference>
<dbReference type="InterPro" id="IPR006847">
    <property type="entry name" value="IF2_N"/>
</dbReference>
<dbReference type="InterPro" id="IPR027417">
    <property type="entry name" value="P-loop_NTPase"/>
</dbReference>
<dbReference type="InterPro" id="IPR005225">
    <property type="entry name" value="Small_GTP-bd"/>
</dbReference>
<dbReference type="InterPro" id="IPR000795">
    <property type="entry name" value="T_Tr_GTP-bd_dom"/>
</dbReference>
<dbReference type="InterPro" id="IPR000178">
    <property type="entry name" value="TF_IF2_bacterial-like"/>
</dbReference>
<dbReference type="InterPro" id="IPR015760">
    <property type="entry name" value="TIF_IF2"/>
</dbReference>
<dbReference type="InterPro" id="IPR023115">
    <property type="entry name" value="TIF_IF2_dom3"/>
</dbReference>
<dbReference type="InterPro" id="IPR036925">
    <property type="entry name" value="TIF_IF2_dom3_sf"/>
</dbReference>
<dbReference type="InterPro" id="IPR009000">
    <property type="entry name" value="Transl_B-barrel_sf"/>
</dbReference>
<dbReference type="NCBIfam" id="TIGR00487">
    <property type="entry name" value="IF-2"/>
    <property type="match status" value="1"/>
</dbReference>
<dbReference type="NCBIfam" id="TIGR00231">
    <property type="entry name" value="small_GTP"/>
    <property type="match status" value="1"/>
</dbReference>
<dbReference type="PANTHER" id="PTHR43381:SF5">
    <property type="entry name" value="TR-TYPE G DOMAIN-CONTAINING PROTEIN"/>
    <property type="match status" value="1"/>
</dbReference>
<dbReference type="PANTHER" id="PTHR43381">
    <property type="entry name" value="TRANSLATION INITIATION FACTOR IF-2-RELATED"/>
    <property type="match status" value="1"/>
</dbReference>
<dbReference type="Pfam" id="PF22042">
    <property type="entry name" value="EF-G_D2"/>
    <property type="match status" value="1"/>
</dbReference>
<dbReference type="Pfam" id="PF00009">
    <property type="entry name" value="GTP_EFTU"/>
    <property type="match status" value="1"/>
</dbReference>
<dbReference type="Pfam" id="PF03144">
    <property type="entry name" value="GTP_EFTU_D2"/>
    <property type="match status" value="1"/>
</dbReference>
<dbReference type="Pfam" id="PF11987">
    <property type="entry name" value="IF-2"/>
    <property type="match status" value="1"/>
</dbReference>
<dbReference type="Pfam" id="PF08364">
    <property type="entry name" value="IF2_assoc"/>
    <property type="match status" value="1"/>
</dbReference>
<dbReference type="Pfam" id="PF04760">
    <property type="entry name" value="IF2_N"/>
    <property type="match status" value="1"/>
</dbReference>
<dbReference type="SUPFAM" id="SSF52156">
    <property type="entry name" value="Initiation factor IF2/eIF5b, domain 3"/>
    <property type="match status" value="1"/>
</dbReference>
<dbReference type="SUPFAM" id="SSF52540">
    <property type="entry name" value="P-loop containing nucleoside triphosphate hydrolases"/>
    <property type="match status" value="1"/>
</dbReference>
<dbReference type="SUPFAM" id="SSF50447">
    <property type="entry name" value="Translation proteins"/>
    <property type="match status" value="2"/>
</dbReference>
<dbReference type="PROSITE" id="PS51722">
    <property type="entry name" value="G_TR_2"/>
    <property type="match status" value="1"/>
</dbReference>
<dbReference type="PROSITE" id="PS01176">
    <property type="entry name" value="IF2"/>
    <property type="match status" value="1"/>
</dbReference>
<gene>
    <name evidence="2" type="primary">infB</name>
    <name type="ordered locus">R00239</name>
    <name type="ORF">SMc02914</name>
</gene>
<reference key="1">
    <citation type="journal article" date="2001" name="Proc. Natl. Acad. Sci. U.S.A.">
        <title>Analysis of the chromosome sequence of the legume symbiont Sinorhizobium meliloti strain 1021.</title>
        <authorList>
            <person name="Capela D."/>
            <person name="Barloy-Hubler F."/>
            <person name="Gouzy J."/>
            <person name="Bothe G."/>
            <person name="Ampe F."/>
            <person name="Batut J."/>
            <person name="Boistard P."/>
            <person name="Becker A."/>
            <person name="Boutry M."/>
            <person name="Cadieu E."/>
            <person name="Dreano S."/>
            <person name="Gloux S."/>
            <person name="Godrie T."/>
            <person name="Goffeau A."/>
            <person name="Kahn D."/>
            <person name="Kiss E."/>
            <person name="Lelaure V."/>
            <person name="Masuy D."/>
            <person name="Pohl T."/>
            <person name="Portetelle D."/>
            <person name="Puehler A."/>
            <person name="Purnelle B."/>
            <person name="Ramsperger U."/>
            <person name="Renard C."/>
            <person name="Thebault P."/>
            <person name="Vandenbol M."/>
            <person name="Weidner S."/>
            <person name="Galibert F."/>
        </authorList>
    </citation>
    <scope>NUCLEOTIDE SEQUENCE [LARGE SCALE GENOMIC DNA]</scope>
    <source>
        <strain>1021</strain>
    </source>
</reference>
<reference key="2">
    <citation type="journal article" date="2001" name="Science">
        <title>The composite genome of the legume symbiont Sinorhizobium meliloti.</title>
        <authorList>
            <person name="Galibert F."/>
            <person name="Finan T.M."/>
            <person name="Long S.R."/>
            <person name="Puehler A."/>
            <person name="Abola P."/>
            <person name="Ampe F."/>
            <person name="Barloy-Hubler F."/>
            <person name="Barnett M.J."/>
            <person name="Becker A."/>
            <person name="Boistard P."/>
            <person name="Bothe G."/>
            <person name="Boutry M."/>
            <person name="Bowser L."/>
            <person name="Buhrmester J."/>
            <person name="Cadieu E."/>
            <person name="Capela D."/>
            <person name="Chain P."/>
            <person name="Cowie A."/>
            <person name="Davis R.W."/>
            <person name="Dreano S."/>
            <person name="Federspiel N.A."/>
            <person name="Fisher R.F."/>
            <person name="Gloux S."/>
            <person name="Godrie T."/>
            <person name="Goffeau A."/>
            <person name="Golding B."/>
            <person name="Gouzy J."/>
            <person name="Gurjal M."/>
            <person name="Hernandez-Lucas I."/>
            <person name="Hong A."/>
            <person name="Huizar L."/>
            <person name="Hyman R.W."/>
            <person name="Jones T."/>
            <person name="Kahn D."/>
            <person name="Kahn M.L."/>
            <person name="Kalman S."/>
            <person name="Keating D.H."/>
            <person name="Kiss E."/>
            <person name="Komp C."/>
            <person name="Lelaure V."/>
            <person name="Masuy D."/>
            <person name="Palm C."/>
            <person name="Peck M.C."/>
            <person name="Pohl T.M."/>
            <person name="Portetelle D."/>
            <person name="Purnelle B."/>
            <person name="Ramsperger U."/>
            <person name="Surzycki R."/>
            <person name="Thebault P."/>
            <person name="Vandenbol M."/>
            <person name="Vorhoelter F.J."/>
            <person name="Weidner S."/>
            <person name="Wells D.H."/>
            <person name="Wong K."/>
            <person name="Yeh K.-C."/>
            <person name="Batut J."/>
        </authorList>
    </citation>
    <scope>NUCLEOTIDE SEQUENCE [LARGE SCALE GENOMIC DNA]</scope>
    <source>
        <strain>1021</strain>
    </source>
</reference>
<accession>Q92SW4</accession>
<sequence>MTDNKDDKTLSVAGKKTLTLKPSGVTQGTVRQDMGRGRTKAVVVETKRTRGPLKHKDERPITPVAATPAARPAEQRPMPPQPSGRPAPQPQPHQPRQEQNRPRGGVVLNDLSAGEMEARRRALAEAQIRDAEEAKRRAEDEVRRRREEEERLAREKEEAARRAAEEAARPPVEAEKTEEKVEAASPAVGERRAETRPQPGRAAPAATPAAPDGAALRGRRGTESEEDERRRSGAGAPRGKVVRPEPAKPAPRAKGDEGRRQGKLTLTTAAVDEDGSQRGRSLSAMRRRQEKFKRSQMQETREKISREVVLPETITIQELSQRMSERAVDVIKFLMKEGQMMKPGDLIDADLAELIAGEFGHTVKRVSESDVEEGIFNISDVDDDMQSRPPIVTIMGHVDHGKTSLLDAIRHANVVAGEAGGITQHIGAYQVEQNGQKITFIDTPGHAAFTAMRARGAQATDIAVLVVAADDSVMPQTIESINHAKAAGVPIIVAINKIDKPSANPQKVRTELLQHEVFVESMGGEVLDVEVSAKNQTNLDKLLEAILLQSEILDLKANPNRTAEGTVVEAELDRGRGAVATVLVQKGTLTPGQIIVAGDQWGRVRALVNDKGEHVKAAGPSTPVEVLGLSGTPAAGDRFAVVESESRAREISEYRQRLAREKAVARQSGSRGSLEQMMTQLQTSGVKEFPLVIKGDVQGSIEAISGALDKLGTDEVRARIVHSGAGGITESDVSLAEASNAAIIGFNVRANKQARDASERAGIEIRYYNIIYDLVDDVKAAMSGLLSPERRETFLGNAEILEVFNITKVGKVAGCRVTEGKVERGVGVRLVRDNVVIHEGKLKTLKRFKDEVSEVQSGQECGMAFENYEDIRAGDTIECFRVEHVTRTL</sequence>
<comment type="function">
    <text evidence="2">One of the essential components for the initiation of protein synthesis. Protects formylmethionyl-tRNA from spontaneous hydrolysis and promotes its binding to the 30S ribosomal subunits. Also involved in the hydrolysis of GTP during the formation of the 70S ribosomal complex.</text>
</comment>
<comment type="subcellular location">
    <subcellularLocation>
        <location evidence="2">Cytoplasm</location>
    </subcellularLocation>
</comment>
<comment type="similarity">
    <text evidence="2">Belongs to the TRAFAC class translation factor GTPase superfamily. Classic translation factor GTPase family. IF-2 subfamily.</text>
</comment>
<name>IF2_RHIME</name>
<feature type="chain" id="PRO_0000137241" description="Translation initiation factor IF-2">
    <location>
        <begin position="1"/>
        <end position="889"/>
    </location>
</feature>
<feature type="domain" description="tr-type G">
    <location>
        <begin position="387"/>
        <end position="554"/>
    </location>
</feature>
<feature type="region of interest" description="Disordered" evidence="3">
    <location>
        <begin position="1"/>
        <end position="299"/>
    </location>
</feature>
<feature type="region of interest" description="G1" evidence="1">
    <location>
        <begin position="396"/>
        <end position="403"/>
    </location>
</feature>
<feature type="region of interest" description="G2" evidence="1">
    <location>
        <begin position="421"/>
        <end position="425"/>
    </location>
</feature>
<feature type="region of interest" description="G3" evidence="1">
    <location>
        <begin position="442"/>
        <end position="445"/>
    </location>
</feature>
<feature type="region of interest" description="G4" evidence="1">
    <location>
        <begin position="496"/>
        <end position="499"/>
    </location>
</feature>
<feature type="region of interest" description="G5" evidence="1">
    <location>
        <begin position="532"/>
        <end position="534"/>
    </location>
</feature>
<feature type="compositionally biased region" description="Low complexity" evidence="3">
    <location>
        <begin position="61"/>
        <end position="76"/>
    </location>
</feature>
<feature type="compositionally biased region" description="Pro residues" evidence="3">
    <location>
        <begin position="77"/>
        <end position="93"/>
    </location>
</feature>
<feature type="compositionally biased region" description="Basic and acidic residues" evidence="3">
    <location>
        <begin position="116"/>
        <end position="182"/>
    </location>
</feature>
<feature type="compositionally biased region" description="Low complexity" evidence="3">
    <location>
        <begin position="196"/>
        <end position="215"/>
    </location>
</feature>
<feature type="compositionally biased region" description="Basic and acidic residues" evidence="3">
    <location>
        <begin position="220"/>
        <end position="231"/>
    </location>
</feature>
<feature type="binding site" evidence="2">
    <location>
        <begin position="396"/>
        <end position="403"/>
    </location>
    <ligand>
        <name>GTP</name>
        <dbReference type="ChEBI" id="CHEBI:37565"/>
    </ligand>
</feature>
<feature type="binding site" evidence="2">
    <location>
        <begin position="442"/>
        <end position="446"/>
    </location>
    <ligand>
        <name>GTP</name>
        <dbReference type="ChEBI" id="CHEBI:37565"/>
    </ligand>
</feature>
<feature type="binding site" evidence="2">
    <location>
        <begin position="496"/>
        <end position="499"/>
    </location>
    <ligand>
        <name>GTP</name>
        <dbReference type="ChEBI" id="CHEBI:37565"/>
    </ligand>
</feature>
<organism>
    <name type="scientific">Rhizobium meliloti (strain 1021)</name>
    <name type="common">Ensifer meliloti</name>
    <name type="synonym">Sinorhizobium meliloti</name>
    <dbReference type="NCBI Taxonomy" id="266834"/>
    <lineage>
        <taxon>Bacteria</taxon>
        <taxon>Pseudomonadati</taxon>
        <taxon>Pseudomonadota</taxon>
        <taxon>Alphaproteobacteria</taxon>
        <taxon>Hyphomicrobiales</taxon>
        <taxon>Rhizobiaceae</taxon>
        <taxon>Sinorhizobium/Ensifer group</taxon>
        <taxon>Sinorhizobium</taxon>
    </lineage>
</organism>
<keyword id="KW-0963">Cytoplasm</keyword>
<keyword id="KW-0342">GTP-binding</keyword>
<keyword id="KW-0396">Initiation factor</keyword>
<keyword id="KW-0547">Nucleotide-binding</keyword>
<keyword id="KW-0648">Protein biosynthesis</keyword>
<keyword id="KW-1185">Reference proteome</keyword>